<proteinExistence type="inferred from homology"/>
<dbReference type="EMBL" id="AE010299">
    <property type="protein sequence ID" value="AAM05641.1"/>
    <property type="molecule type" value="Genomic_DNA"/>
</dbReference>
<dbReference type="RefSeq" id="WP_011022227.1">
    <property type="nucleotide sequence ID" value="NC_003552.1"/>
</dbReference>
<dbReference type="SMR" id="Q8TNN7"/>
<dbReference type="STRING" id="188937.MA_2246"/>
<dbReference type="MEROPS" id="I04.089"/>
<dbReference type="EnsemblBacteria" id="AAM05641">
    <property type="protein sequence ID" value="AAM05641"/>
    <property type="gene ID" value="MA_2246"/>
</dbReference>
<dbReference type="GeneID" id="1474134"/>
<dbReference type="KEGG" id="mac:MA_2246"/>
<dbReference type="HOGENOM" id="CLU_023330_0_2_2"/>
<dbReference type="InParanoid" id="Q8TNN7"/>
<dbReference type="OrthoDB" id="371710at2157"/>
<dbReference type="PhylomeDB" id="Q8TNN7"/>
<dbReference type="Proteomes" id="UP000002487">
    <property type="component" value="Chromosome"/>
</dbReference>
<dbReference type="GO" id="GO:0005615">
    <property type="term" value="C:extracellular space"/>
    <property type="evidence" value="ECO:0000318"/>
    <property type="project" value="GO_Central"/>
</dbReference>
<dbReference type="GO" id="GO:0004867">
    <property type="term" value="F:serine-type endopeptidase inhibitor activity"/>
    <property type="evidence" value="ECO:0007669"/>
    <property type="project" value="UniProtKB-KW"/>
</dbReference>
<dbReference type="CDD" id="cd19591">
    <property type="entry name" value="serpin_like"/>
    <property type="match status" value="1"/>
</dbReference>
<dbReference type="Gene3D" id="2.30.39.10">
    <property type="entry name" value="Alpha-1-antitrypsin, domain 1"/>
    <property type="match status" value="1"/>
</dbReference>
<dbReference type="Gene3D" id="3.30.497.10">
    <property type="entry name" value="Antithrombin, subunit I, domain 2"/>
    <property type="match status" value="1"/>
</dbReference>
<dbReference type="InterPro" id="IPR023795">
    <property type="entry name" value="Serpin_CS"/>
</dbReference>
<dbReference type="InterPro" id="IPR023796">
    <property type="entry name" value="Serpin_dom"/>
</dbReference>
<dbReference type="InterPro" id="IPR000215">
    <property type="entry name" value="Serpin_fam"/>
</dbReference>
<dbReference type="InterPro" id="IPR036186">
    <property type="entry name" value="Serpin_sf"/>
</dbReference>
<dbReference type="InterPro" id="IPR042178">
    <property type="entry name" value="Serpin_sf_1"/>
</dbReference>
<dbReference type="InterPro" id="IPR042185">
    <property type="entry name" value="Serpin_sf_2"/>
</dbReference>
<dbReference type="PANTHER" id="PTHR11461:SF211">
    <property type="entry name" value="GH10112P-RELATED"/>
    <property type="match status" value="1"/>
</dbReference>
<dbReference type="PANTHER" id="PTHR11461">
    <property type="entry name" value="SERINE PROTEASE INHIBITOR, SERPIN"/>
    <property type="match status" value="1"/>
</dbReference>
<dbReference type="Pfam" id="PF00079">
    <property type="entry name" value="Serpin"/>
    <property type="match status" value="1"/>
</dbReference>
<dbReference type="SMART" id="SM00093">
    <property type="entry name" value="SERPIN"/>
    <property type="match status" value="1"/>
</dbReference>
<dbReference type="SUPFAM" id="SSF56574">
    <property type="entry name" value="Serpins"/>
    <property type="match status" value="1"/>
</dbReference>
<dbReference type="PROSITE" id="PS00284">
    <property type="entry name" value="SERPIN"/>
    <property type="match status" value="1"/>
</dbReference>
<accession>Q8TNN7</accession>
<reference key="1">
    <citation type="journal article" date="2002" name="Genome Res.">
        <title>The genome of Methanosarcina acetivorans reveals extensive metabolic and physiological diversity.</title>
        <authorList>
            <person name="Galagan J.E."/>
            <person name="Nusbaum C."/>
            <person name="Roy A."/>
            <person name="Endrizzi M.G."/>
            <person name="Macdonald P."/>
            <person name="FitzHugh W."/>
            <person name="Calvo S."/>
            <person name="Engels R."/>
            <person name="Smirnov S."/>
            <person name="Atnoor D."/>
            <person name="Brown A."/>
            <person name="Allen N."/>
            <person name="Naylor J."/>
            <person name="Stange-Thomann N."/>
            <person name="DeArellano K."/>
            <person name="Johnson R."/>
            <person name="Linton L."/>
            <person name="McEwan P."/>
            <person name="McKernan K."/>
            <person name="Talamas J."/>
            <person name="Tirrell A."/>
            <person name="Ye W."/>
            <person name="Zimmer A."/>
            <person name="Barber R.D."/>
            <person name="Cann I."/>
            <person name="Graham D.E."/>
            <person name="Grahame D.A."/>
            <person name="Guss A.M."/>
            <person name="Hedderich R."/>
            <person name="Ingram-Smith C."/>
            <person name="Kuettner H.C."/>
            <person name="Krzycki J.A."/>
            <person name="Leigh J.A."/>
            <person name="Li W."/>
            <person name="Liu J."/>
            <person name="Mukhopadhyay B."/>
            <person name="Reeve J.N."/>
            <person name="Smith K."/>
            <person name="Springer T.A."/>
            <person name="Umayam L.A."/>
            <person name="White O."/>
            <person name="White R.H."/>
            <person name="de Macario E.C."/>
            <person name="Ferry J.G."/>
            <person name="Jarrell K.F."/>
            <person name="Jing H."/>
            <person name="Macario A.J.L."/>
            <person name="Paulsen I.T."/>
            <person name="Pritchett M."/>
            <person name="Sowers K.R."/>
            <person name="Swanson R.V."/>
            <person name="Zinder S.H."/>
            <person name="Lander E."/>
            <person name="Metcalf W.W."/>
            <person name="Birren B."/>
        </authorList>
    </citation>
    <scope>NUCLEOTIDE SEQUENCE [LARGE SCALE GENOMIC DNA]</scope>
    <source>
        <strain>ATCC 35395 / DSM 2834 / JCM 12185 / C2A</strain>
    </source>
</reference>
<name>Y2246_METAC</name>
<comment type="similarity">
    <text evidence="2">Belongs to the serpin family.</text>
</comment>
<organism>
    <name type="scientific">Methanosarcina acetivorans (strain ATCC 35395 / DSM 2834 / JCM 12185 / C2A)</name>
    <dbReference type="NCBI Taxonomy" id="188937"/>
    <lineage>
        <taxon>Archaea</taxon>
        <taxon>Methanobacteriati</taxon>
        <taxon>Methanobacteriota</taxon>
        <taxon>Stenosarchaea group</taxon>
        <taxon>Methanomicrobia</taxon>
        <taxon>Methanosarcinales</taxon>
        <taxon>Methanosarcinaceae</taxon>
        <taxon>Methanosarcina</taxon>
    </lineage>
</organism>
<evidence type="ECO:0000255" key="1"/>
<evidence type="ECO:0000305" key="2"/>
<protein>
    <recommendedName>
        <fullName>Uncharacterized serpin-like protein MA_2246</fullName>
    </recommendedName>
</protein>
<gene>
    <name type="ordered locus">MA_2246</name>
</gene>
<feature type="chain" id="PRO_0000094160" description="Uncharacterized serpin-like protein MA_2246">
    <location>
        <begin position="1"/>
        <end position="426"/>
    </location>
</feature>
<feature type="site" description="Reactive bond" evidence="1">
    <location>
        <begin position="384"/>
        <end position="385"/>
    </location>
</feature>
<keyword id="KW-0646">Protease inhibitor</keyword>
<keyword id="KW-1185">Reference proteome</keyword>
<keyword id="KW-0722">Serine protease inhibitor</keyword>
<sequence>MTKCKIILVISLSILALLCIGCIENSTINTKTTVNSTVDTKTIINTDSVEEYDIATANNAFTFDLYSMVKNEDENVLFSPYSIFSAMAVCYDGTEGSTKEQMSNAFYYPLNKLVLEESSKKMIGTINSNNDAYDLETTNALWVLENYTLNEQYVSNAKNYYDGMVTPVDFVNEPEASTDTINKWVEEKTNEKIKKLIPEGEIGPDTRLVITNTIYFNGTWVKEFDPDITRTRSFTLSNGDEKSVSTMRIVEKFNYGEDQKAKILELPYKGDNLSMYIVLPKENNITELENNFTLKYYSKLKENMSTGDYVEVWIPKFTFKTEAELKSPLIEMGVVDAFNPNAANFSGITPDKSLAISEIYHQAFVDVHEKGTEAAAATGAIILEEEIEYTWEFKADHPFLFMIEDKRTGCILFIGKVESPEYEKMS</sequence>